<organism>
    <name type="scientific">Rhinella marina</name>
    <name type="common">Cane toad</name>
    <name type="synonym">Bufo marinus</name>
    <dbReference type="NCBI Taxonomy" id="8386"/>
    <lineage>
        <taxon>Eukaryota</taxon>
        <taxon>Metazoa</taxon>
        <taxon>Chordata</taxon>
        <taxon>Craniata</taxon>
        <taxon>Vertebrata</taxon>
        <taxon>Euteleostomi</taxon>
        <taxon>Amphibia</taxon>
        <taxon>Batrachia</taxon>
        <taxon>Anura</taxon>
        <taxon>Neobatrachia</taxon>
        <taxon>Hyloidea</taxon>
        <taxon>Bufonidae</taxon>
        <taxon>Rhinella</taxon>
    </lineage>
</organism>
<proteinExistence type="evidence at transcript level"/>
<accession>P30716</accession>
<reference key="1">
    <citation type="journal article" date="1992" name="J. Biol. Chem.">
        <title>Primary sequence and functional expression of a novel ouabain-resistant Na,K-ATPase. The beta subunit modulates potassium activation of the Na,K-pump.</title>
        <authorList>
            <person name="Jaisser F."/>
            <person name="Canessa C.M."/>
            <person name="Horisberger J.-D."/>
            <person name="Rossier B.C."/>
        </authorList>
    </citation>
    <scope>NUCLEOTIDE SEQUENCE [MRNA]</scope>
    <source>
        <tissue>Urinary bladder urothelium</tissue>
    </source>
</reference>
<feature type="chain" id="PRO_0000219119" description="Sodium/potassium-transporting ATPase subunit beta-3">
    <location>
        <begin position="1"/>
        <end position="279"/>
    </location>
</feature>
<feature type="topological domain" description="Cytoplasmic" evidence="2">
    <location>
        <begin position="1"/>
        <end position="35"/>
    </location>
</feature>
<feature type="transmembrane region" description="Helical; Signal-anchor for type II membrane protein" evidence="2">
    <location>
        <begin position="36"/>
        <end position="56"/>
    </location>
</feature>
<feature type="topological domain" description="Extracellular" evidence="2">
    <location>
        <begin position="57"/>
        <end position="279"/>
    </location>
</feature>
<feature type="glycosylation site" description="N-linked (GlcNAc...) asparagine" evidence="2">
    <location>
        <position position="147"/>
    </location>
</feature>
<feature type="glycosylation site" description="N-linked (GlcNAc...) asparagine" evidence="2">
    <location>
        <position position="191"/>
    </location>
</feature>
<feature type="glycosylation site" description="N-linked (GlcNAc...) asparagine" evidence="2">
    <location>
        <position position="198"/>
    </location>
</feature>
<feature type="glycosylation site" description="N-linked (GlcNAc...) asparagine" evidence="2">
    <location>
        <position position="239"/>
    </location>
</feature>
<feature type="disulfide bond" evidence="1">
    <location>
        <begin position="125"/>
        <end position="144"/>
    </location>
</feature>
<feature type="disulfide bond" evidence="1">
    <location>
        <begin position="154"/>
        <end position="171"/>
    </location>
</feature>
<feature type="disulfide bond" evidence="1">
    <location>
        <begin position="192"/>
        <end position="250"/>
    </location>
</feature>
<protein>
    <recommendedName>
        <fullName>Sodium/potassium-transporting ATPase subunit beta-3</fullName>
    </recommendedName>
    <alternativeName>
        <fullName>Sodium/potassium-dependent ATPase beta-3 subunit</fullName>
    </alternativeName>
</protein>
<sequence length="279" mass="31678">MAKEENKSGEQSSSEWKQFIYNPSSGEILGRTASSWALILLFYLVFYGFLAGLFTLTMWVMLQTLDDSVPKYRDRVSFPGLMISPKSAGLEISFSKSDKSHMKSILKFFTHFYHHTMTPYKLQMCSARKAITTEQEGVEEKKSCQFNRSSLGPCAGLEGNEYFGYNDGSPCVLVKMNRIIGLKPDGNPHINCTSKAENISLQYYPEYGKIDLMYYPYYGKKTHVNYVQPLVAVKITPSNSTGTSEIVLECKLYGSPNLKNNDDRDKFLGRVNFKLEIKD</sequence>
<evidence type="ECO:0000250" key="1"/>
<evidence type="ECO:0000255" key="2"/>
<evidence type="ECO:0000305" key="3"/>
<dbReference type="EMBL" id="Z11799">
    <property type="protein sequence ID" value="CAA77843.1"/>
    <property type="molecule type" value="mRNA"/>
</dbReference>
<dbReference type="EMBL" id="Z11800">
    <property type="protein sequence ID" value="CAA77844.1"/>
    <property type="molecule type" value="mRNA"/>
</dbReference>
<dbReference type="PIR" id="C43451">
    <property type="entry name" value="C43451"/>
</dbReference>
<dbReference type="SMR" id="P30716"/>
<dbReference type="GO" id="GO:0005890">
    <property type="term" value="C:sodium:potassium-exchanging ATPase complex"/>
    <property type="evidence" value="ECO:0007669"/>
    <property type="project" value="InterPro"/>
</dbReference>
<dbReference type="GO" id="GO:0001671">
    <property type="term" value="F:ATPase activator activity"/>
    <property type="evidence" value="ECO:0007669"/>
    <property type="project" value="TreeGrafter"/>
</dbReference>
<dbReference type="GO" id="GO:0030007">
    <property type="term" value="P:intracellular potassium ion homeostasis"/>
    <property type="evidence" value="ECO:0007669"/>
    <property type="project" value="TreeGrafter"/>
</dbReference>
<dbReference type="GO" id="GO:0006883">
    <property type="term" value="P:intracellular sodium ion homeostasis"/>
    <property type="evidence" value="ECO:0007669"/>
    <property type="project" value="TreeGrafter"/>
</dbReference>
<dbReference type="GO" id="GO:1990573">
    <property type="term" value="P:potassium ion import across plasma membrane"/>
    <property type="evidence" value="ECO:0007669"/>
    <property type="project" value="TreeGrafter"/>
</dbReference>
<dbReference type="GO" id="GO:0036376">
    <property type="term" value="P:sodium ion export across plasma membrane"/>
    <property type="evidence" value="ECO:0007669"/>
    <property type="project" value="TreeGrafter"/>
</dbReference>
<dbReference type="FunFam" id="1.20.5.170:FF:000068">
    <property type="entry name" value="Sodium/potassium-transporting ATPase subunit beta"/>
    <property type="match status" value="1"/>
</dbReference>
<dbReference type="Gene3D" id="2.60.40.1660">
    <property type="entry name" value="Na, k-atpase alpha subunit"/>
    <property type="match status" value="1"/>
</dbReference>
<dbReference type="InterPro" id="IPR000402">
    <property type="entry name" value="Na/K_ATPase_sub_beta"/>
</dbReference>
<dbReference type="InterPro" id="IPR038702">
    <property type="entry name" value="Na/K_ATPase_sub_beta_sf"/>
</dbReference>
<dbReference type="NCBIfam" id="TIGR01107">
    <property type="entry name" value="Na_K_ATPase_bet"/>
    <property type="match status" value="1"/>
</dbReference>
<dbReference type="PANTHER" id="PTHR11523">
    <property type="entry name" value="SODIUM/POTASSIUM-DEPENDENT ATPASE BETA SUBUNIT"/>
    <property type="match status" value="1"/>
</dbReference>
<dbReference type="PANTHER" id="PTHR11523:SF47">
    <property type="entry name" value="SODIUM_POTASSIUM-TRANSPORTING ATPASE SUBUNIT BETA-3"/>
    <property type="match status" value="1"/>
</dbReference>
<dbReference type="Pfam" id="PF00287">
    <property type="entry name" value="Na_K-ATPase"/>
    <property type="match status" value="1"/>
</dbReference>
<dbReference type="PROSITE" id="PS00390">
    <property type="entry name" value="ATPASE_NA_K_BETA_1"/>
    <property type="match status" value="1"/>
</dbReference>
<dbReference type="PROSITE" id="PS00391">
    <property type="entry name" value="ATPASE_NA_K_BETA_2"/>
    <property type="match status" value="1"/>
</dbReference>
<name>AT1B3_RHIMB</name>
<keyword id="KW-1003">Cell membrane</keyword>
<keyword id="KW-1015">Disulfide bond</keyword>
<keyword id="KW-0325">Glycoprotein</keyword>
<keyword id="KW-0406">Ion transport</keyword>
<keyword id="KW-0472">Membrane</keyword>
<keyword id="KW-0630">Potassium</keyword>
<keyword id="KW-0633">Potassium transport</keyword>
<keyword id="KW-0735">Signal-anchor</keyword>
<keyword id="KW-0915">Sodium</keyword>
<keyword id="KW-0739">Sodium transport</keyword>
<keyword id="KW-0740">Sodium/potassium transport</keyword>
<keyword id="KW-0812">Transmembrane</keyword>
<keyword id="KW-1133">Transmembrane helix</keyword>
<keyword id="KW-0813">Transport</keyword>
<comment type="function">
    <text>This is the non-catalytic component of the active enzyme, which catalyzes the hydrolysis of ATP coupled with the exchange of Na(+) and K(+) ions across the plasma membrane. The exact function of this glycoprotein is not known. Some specific sequence of the beta subunit can modulate the activation of the Na,K-pump by extracellular potassium ions.</text>
</comment>
<comment type="subunit">
    <text evidence="3">The sodium/potassium-transporting ATPase is composed of a catalytic alpha subunit, an auxiliary non-catalytic beta subunit and an additional regulatory subunit.</text>
</comment>
<comment type="subcellular location">
    <subcellularLocation>
        <location evidence="3">Cell membrane</location>
        <topology>Single-pass type II membrane protein</topology>
    </subcellularLocation>
</comment>
<comment type="tissue specificity">
    <text>Abundantly in brain, eye and testis, at a lower extent in spleen.</text>
</comment>
<comment type="similarity">
    <text evidence="3">Belongs to the X(+)/potassium ATPases subunit beta family.</text>
</comment>